<proteinExistence type="evidence at protein level"/>
<sequence>MQDAITAVINSSDVQGKYLDTAALEKLKSYFSTGELRVRAATTIAANAAAIVKEAVAKSLLYSDITRPGGNMYTTRRYAACIRDLDYYLRYATYAMLAGDPSILDERVLNGLKETYNSLGVPISATVQAIQAMKEVTASLVGPDAGKEMGVYFDYICSGLS</sequence>
<name>APCB_MASLA</name>
<reference key="1">
    <citation type="journal article" date="1981" name="Hoppe-Seyler's Z. Physiol. Chem.">
        <title>The complete amino acid sequence of both subunits of allophycocyanin, a light harvesting protein-pigment complex from the cyanobacterium Mastigocladus laminosus.</title>
        <authorList>
            <person name="Sidler W."/>
            <person name="Gysi J."/>
            <person name="Isker E."/>
            <person name="Zuber H."/>
        </authorList>
    </citation>
    <scope>PROTEIN SEQUENCE</scope>
</reference>
<reference key="2">
    <citation type="journal article" date="1987" name="Biol. Chem. Hoppe-Seyler">
        <title>Isolation and localization of N4-methylasparagine in phycobiliproteins from the cyanobacterium Mastigocladus laminosus.</title>
        <authorList>
            <person name="Ruembeli R."/>
            <person name="Suter F."/>
            <person name="Wirth M."/>
            <person name="Sidler W."/>
            <person name="Zuber H."/>
        </authorList>
    </citation>
    <scope>PROTEIN SEQUENCE OF 59-82</scope>
    <scope>METHYLATION AT ASN-71</scope>
</reference>
<reference key="3">
    <citation type="journal article" date="1987" name="FEBS Lett.">
        <title>Gamma-N-methylasparagine in phycobiliproteins from the cyanobacteria Mastigocladus laminosus and Calothrix.</title>
        <authorList>
            <person name="Ruembeli R."/>
            <person name="Suter F."/>
            <person name="Wirth M."/>
            <person name="Sidler W."/>
            <person name="Zuber H."/>
        </authorList>
    </citation>
    <scope>PROTEIN SEQUENCE OF 55-82</scope>
    <scope>METHYLATION AT ASN-71</scope>
</reference>
<reference key="4">
    <citation type="journal article" date="1999" name="Proc. Natl. Acad. Sci. U.S.A.">
        <title>Structural analysis at 2.2 A of orthorhombic crystals presents the asymmetry of the allophycocyanin-linker complex, AP.LC7.8, from phycobilisomes of Mastigocladus laminosus.</title>
        <authorList>
            <person name="Reuter W."/>
            <person name="Wiegand G."/>
            <person name="Huber R."/>
            <person name="Than M.E."/>
        </authorList>
    </citation>
    <scope>X-RAY CRYSTALLOGRAPHY (2.3 ANGSTROMS)</scope>
    <scope>METHYLATION AT ASN-71</scope>
    <source>
        <strain>PCC 7603</strain>
    </source>
</reference>
<evidence type="ECO:0000269" key="1">
    <source>
    </source>
</evidence>
<evidence type="ECO:0000269" key="2">
    <source>
    </source>
</evidence>
<evidence type="ECO:0000269" key="3">
    <source ref="3"/>
</evidence>
<evidence type="ECO:0000305" key="4"/>
<evidence type="ECO:0007829" key="5">
    <source>
        <dbReference type="PDB" id="1B33"/>
    </source>
</evidence>
<feature type="chain" id="PRO_0000199099" description="Allophycocyanin beta chain">
    <location>
        <begin position="1"/>
        <end position="161"/>
    </location>
</feature>
<feature type="binding site" description="covalent">
    <location>
        <position position="81"/>
    </location>
    <ligand>
        <name>(2R,3E)-phycocyanobilin</name>
        <dbReference type="ChEBI" id="CHEBI:85275"/>
    </ligand>
</feature>
<feature type="modified residue" description="N4-methylasparagine" evidence="1 2 3">
    <location>
        <position position="71"/>
    </location>
</feature>
<feature type="sequence conflict" description="In Ref. 1; AA sequence." evidence="4" ref="1">
    <original>SL</original>
    <variation>KT</variation>
    <location>
        <begin position="59"/>
        <end position="60"/>
    </location>
</feature>
<feature type="sequence conflict" description="In Ref. 1; AA sequence." evidence="4" ref="1">
    <original>R</original>
    <variation>L</variation>
    <location>
        <position position="67"/>
    </location>
</feature>
<feature type="sequence conflict" description="In Ref. 1; AA sequence." evidence="4" ref="1">
    <original>N</original>
    <variation>D</variation>
    <location>
        <position position="71"/>
    </location>
</feature>
<feature type="helix" evidence="5">
    <location>
        <begin position="4"/>
        <end position="13"/>
    </location>
</feature>
<feature type="turn" evidence="5">
    <location>
        <begin position="14"/>
        <end position="16"/>
    </location>
</feature>
<feature type="helix" evidence="5">
    <location>
        <begin position="21"/>
        <end position="46"/>
    </location>
</feature>
<feature type="helix" evidence="5">
    <location>
        <begin position="48"/>
        <end position="59"/>
    </location>
</feature>
<feature type="turn" evidence="5">
    <location>
        <begin position="60"/>
        <end position="62"/>
    </location>
</feature>
<feature type="turn" evidence="5">
    <location>
        <begin position="64"/>
        <end position="66"/>
    </location>
</feature>
<feature type="helix" evidence="5">
    <location>
        <begin position="75"/>
        <end position="98"/>
    </location>
</feature>
<feature type="helix" evidence="5">
    <location>
        <begin position="102"/>
        <end position="107"/>
    </location>
</feature>
<feature type="helix" evidence="5">
    <location>
        <begin position="112"/>
        <end position="119"/>
    </location>
</feature>
<feature type="helix" evidence="5">
    <location>
        <begin position="123"/>
        <end position="160"/>
    </location>
</feature>
<dbReference type="PDB" id="1B33">
    <property type="method" value="X-ray"/>
    <property type="resolution" value="2.30 A"/>
    <property type="chains" value="B/D/F/I/K/M=1-161"/>
</dbReference>
<dbReference type="PDBsum" id="1B33"/>
<dbReference type="SMR" id="P00318"/>
<dbReference type="iPTMnet" id="P00318"/>
<dbReference type="EvolutionaryTrace" id="P00318"/>
<dbReference type="GO" id="GO:0030089">
    <property type="term" value="C:phycobilisome"/>
    <property type="evidence" value="ECO:0007669"/>
    <property type="project" value="UniProtKB-KW"/>
</dbReference>
<dbReference type="GO" id="GO:0031676">
    <property type="term" value="C:plasma membrane-derived thylakoid membrane"/>
    <property type="evidence" value="ECO:0007669"/>
    <property type="project" value="UniProtKB-SubCell"/>
</dbReference>
<dbReference type="GO" id="GO:0015979">
    <property type="term" value="P:photosynthesis"/>
    <property type="evidence" value="ECO:0007669"/>
    <property type="project" value="UniProtKB-KW"/>
</dbReference>
<dbReference type="CDD" id="cd12126">
    <property type="entry name" value="APC_beta"/>
    <property type="match status" value="1"/>
</dbReference>
<dbReference type="Gene3D" id="1.10.490.20">
    <property type="entry name" value="Phycocyanins"/>
    <property type="match status" value="1"/>
</dbReference>
<dbReference type="InterPro" id="IPR006245">
    <property type="entry name" value="Allophycocyanin_b"/>
</dbReference>
<dbReference type="InterPro" id="IPR009050">
    <property type="entry name" value="Globin-like_sf"/>
</dbReference>
<dbReference type="InterPro" id="IPR012128">
    <property type="entry name" value="Phycobilisome_asu/bsu"/>
</dbReference>
<dbReference type="InterPro" id="IPR038719">
    <property type="entry name" value="Phycobilisome_asu/bsu_sf"/>
</dbReference>
<dbReference type="NCBIfam" id="TIGR01337">
    <property type="entry name" value="apcB"/>
    <property type="match status" value="1"/>
</dbReference>
<dbReference type="PANTHER" id="PTHR34011:SF3">
    <property type="entry name" value="ALLOPHYCOCYANIN BETA CHAIN"/>
    <property type="match status" value="1"/>
</dbReference>
<dbReference type="PANTHER" id="PTHR34011">
    <property type="entry name" value="PHYCOBILISOME 32.1 KDA LINKER POLYPEPTIDE, PHYCOCYANIN-ASSOCIATED, ROD 2-RELATED"/>
    <property type="match status" value="1"/>
</dbReference>
<dbReference type="Pfam" id="PF00502">
    <property type="entry name" value="Phycobilisome"/>
    <property type="match status" value="1"/>
</dbReference>
<dbReference type="PIRSF" id="PIRSF000081">
    <property type="entry name" value="Phycocyanin"/>
    <property type="match status" value="1"/>
</dbReference>
<dbReference type="SUPFAM" id="SSF46458">
    <property type="entry name" value="Globin-like"/>
    <property type="match status" value="1"/>
</dbReference>
<organism>
    <name type="scientific">Mastigocladus laminosus</name>
    <name type="common">Fischerella sp.</name>
    <dbReference type="NCBI Taxonomy" id="83541"/>
    <lineage>
        <taxon>Bacteria</taxon>
        <taxon>Bacillati</taxon>
        <taxon>Cyanobacteriota</taxon>
        <taxon>Cyanophyceae</taxon>
        <taxon>Nostocales</taxon>
        <taxon>Hapalosiphonaceae</taxon>
        <taxon>Mastigocladus</taxon>
    </lineage>
</organism>
<gene>
    <name type="primary">apcB</name>
</gene>
<comment type="function">
    <text>Light-harvesting photosynthetic bile pigment-protein from the phycobiliprotein complex. Allophycocyanin has a maximum absorption at approximately 650 nanometers.</text>
</comment>
<comment type="subunit">
    <text>Heterodimer of an alpha and a beta chain.</text>
</comment>
<comment type="subcellular location">
    <subcellularLocation>
        <location>Cellular thylakoid membrane</location>
        <topology>Peripheral membrane protein</topology>
        <orientation>Cytoplasmic side</orientation>
    </subcellularLocation>
    <text>Forms the core of the phycobilisome.</text>
</comment>
<comment type="PTM">
    <text>Contains one covalently linked phycocyanobilin chromophore.</text>
</comment>
<comment type="similarity">
    <text evidence="4">Belongs to the phycobiliprotein family.</text>
</comment>
<accession>P00318</accession>
<protein>
    <recommendedName>
        <fullName>Allophycocyanin beta chain</fullName>
    </recommendedName>
</protein>
<keyword id="KW-0002">3D-structure</keyword>
<keyword id="KW-0042">Antenna complex</keyword>
<keyword id="KW-0089">Bile pigment</keyword>
<keyword id="KW-0157">Chromophore</keyword>
<keyword id="KW-0903">Direct protein sequencing</keyword>
<keyword id="KW-0249">Electron transport</keyword>
<keyword id="KW-0472">Membrane</keyword>
<keyword id="KW-0488">Methylation</keyword>
<keyword id="KW-0602">Photosynthesis</keyword>
<keyword id="KW-0605">Phycobilisome</keyword>
<keyword id="KW-0793">Thylakoid</keyword>
<keyword id="KW-0813">Transport</keyword>